<feature type="chain" id="PRO_1000194880" description="Putative 4-hydroxy-4-methyl-2-oxoglutarate aldolase">
    <location>
        <begin position="1"/>
        <end position="166"/>
    </location>
</feature>
<feature type="binding site" evidence="1">
    <location>
        <begin position="74"/>
        <end position="77"/>
    </location>
    <ligand>
        <name>substrate</name>
    </ligand>
</feature>
<feature type="binding site" evidence="1">
    <location>
        <position position="96"/>
    </location>
    <ligand>
        <name>substrate</name>
    </ligand>
</feature>
<feature type="binding site" evidence="1">
    <location>
        <position position="97"/>
    </location>
    <ligand>
        <name>a divalent metal cation</name>
        <dbReference type="ChEBI" id="CHEBI:60240"/>
    </ligand>
</feature>
<reference key="1">
    <citation type="journal article" date="2008" name="J. Biotechnol.">
        <title>The genome of Xanthomonas campestris pv. campestris B100 and its use for the reconstruction of metabolic pathways involved in xanthan biosynthesis.</title>
        <authorList>
            <person name="Vorhoelter F.-J."/>
            <person name="Schneiker S."/>
            <person name="Goesmann A."/>
            <person name="Krause L."/>
            <person name="Bekel T."/>
            <person name="Kaiser O."/>
            <person name="Linke B."/>
            <person name="Patschkowski T."/>
            <person name="Rueckert C."/>
            <person name="Schmid J."/>
            <person name="Sidhu V.K."/>
            <person name="Sieber V."/>
            <person name="Tauch A."/>
            <person name="Watt S.A."/>
            <person name="Weisshaar B."/>
            <person name="Becker A."/>
            <person name="Niehaus K."/>
            <person name="Puehler A."/>
        </authorList>
    </citation>
    <scope>NUCLEOTIDE SEQUENCE [LARGE SCALE GENOMIC DNA]</scope>
    <source>
        <strain>B100</strain>
    </source>
</reference>
<keyword id="KW-0456">Lyase</keyword>
<keyword id="KW-0479">Metal-binding</keyword>
<proteinExistence type="inferred from homology"/>
<comment type="function">
    <text evidence="1">Catalyzes the aldol cleavage of 4-hydroxy-4-methyl-2-oxoglutarate (HMG) into 2 molecules of pyruvate. Also contains a secondary oxaloacetate (OAA) decarboxylase activity due to the common pyruvate enolate transition state formed following C-C bond cleavage in the retro-aldol and decarboxylation reactions (By similarity).</text>
</comment>
<comment type="catalytic activity">
    <reaction>
        <text>4-hydroxy-4-methyl-2-oxoglutarate = 2 pyruvate</text>
        <dbReference type="Rhea" id="RHEA:22748"/>
        <dbReference type="ChEBI" id="CHEBI:15361"/>
        <dbReference type="ChEBI" id="CHEBI:58276"/>
        <dbReference type="EC" id="4.1.3.17"/>
    </reaction>
</comment>
<comment type="catalytic activity">
    <reaction>
        <text>oxaloacetate + H(+) = pyruvate + CO2</text>
        <dbReference type="Rhea" id="RHEA:15641"/>
        <dbReference type="ChEBI" id="CHEBI:15361"/>
        <dbReference type="ChEBI" id="CHEBI:15378"/>
        <dbReference type="ChEBI" id="CHEBI:16452"/>
        <dbReference type="ChEBI" id="CHEBI:16526"/>
        <dbReference type="EC" id="4.1.1.112"/>
    </reaction>
</comment>
<comment type="cofactor">
    <cofactor evidence="1">
        <name>a divalent metal cation</name>
        <dbReference type="ChEBI" id="CHEBI:60240"/>
    </cofactor>
    <text evidence="1">Divalent metal cation.</text>
</comment>
<comment type="subunit">
    <text evidence="1">Homotrimer.</text>
</comment>
<comment type="similarity">
    <text evidence="2">Belongs to the class II aldolase/RraA-like family.</text>
</comment>
<accession>B0RQZ0</accession>
<dbReference type="EC" id="4.1.3.17"/>
<dbReference type="EC" id="4.1.1.112"/>
<dbReference type="EMBL" id="AM920689">
    <property type="protein sequence ID" value="CAP50875.1"/>
    <property type="molecule type" value="Genomic_DNA"/>
</dbReference>
<dbReference type="SMR" id="B0RQZ0"/>
<dbReference type="KEGG" id="xca:xcc-b100_1525"/>
<dbReference type="HOGENOM" id="CLU_072626_4_0_6"/>
<dbReference type="Proteomes" id="UP000001188">
    <property type="component" value="Chromosome"/>
</dbReference>
<dbReference type="GO" id="GO:0047443">
    <property type="term" value="F:4-hydroxy-4-methyl-2-oxoglutarate aldolase activity"/>
    <property type="evidence" value="ECO:0007669"/>
    <property type="project" value="UniProtKB-EC"/>
</dbReference>
<dbReference type="GO" id="GO:0046872">
    <property type="term" value="F:metal ion binding"/>
    <property type="evidence" value="ECO:0007669"/>
    <property type="project" value="UniProtKB-KW"/>
</dbReference>
<dbReference type="GO" id="GO:0008948">
    <property type="term" value="F:oxaloacetate decarboxylase activity"/>
    <property type="evidence" value="ECO:0007669"/>
    <property type="project" value="UniProtKB-EC"/>
</dbReference>
<dbReference type="GO" id="GO:0008428">
    <property type="term" value="F:ribonuclease inhibitor activity"/>
    <property type="evidence" value="ECO:0007669"/>
    <property type="project" value="InterPro"/>
</dbReference>
<dbReference type="GO" id="GO:0051252">
    <property type="term" value="P:regulation of RNA metabolic process"/>
    <property type="evidence" value="ECO:0007669"/>
    <property type="project" value="InterPro"/>
</dbReference>
<dbReference type="CDD" id="cd16841">
    <property type="entry name" value="RraA_family"/>
    <property type="match status" value="1"/>
</dbReference>
<dbReference type="Gene3D" id="3.50.30.40">
    <property type="entry name" value="Ribonuclease E inhibitor RraA/RraA-like"/>
    <property type="match status" value="1"/>
</dbReference>
<dbReference type="InterPro" id="IPR010203">
    <property type="entry name" value="RraA"/>
</dbReference>
<dbReference type="InterPro" id="IPR005493">
    <property type="entry name" value="RraA/RraA-like"/>
</dbReference>
<dbReference type="InterPro" id="IPR036704">
    <property type="entry name" value="RraA/RraA-like_sf"/>
</dbReference>
<dbReference type="NCBIfam" id="TIGR01935">
    <property type="entry name" value="NOT-MenG"/>
    <property type="match status" value="1"/>
</dbReference>
<dbReference type="NCBIfam" id="NF006875">
    <property type="entry name" value="PRK09372.1"/>
    <property type="match status" value="1"/>
</dbReference>
<dbReference type="PANTHER" id="PTHR33254">
    <property type="entry name" value="4-HYDROXY-4-METHYL-2-OXOGLUTARATE ALDOLASE 3-RELATED"/>
    <property type="match status" value="1"/>
</dbReference>
<dbReference type="PANTHER" id="PTHR33254:SF29">
    <property type="entry name" value="REGULATOR OF RIBONUCLEASE ACTIVITY A"/>
    <property type="match status" value="1"/>
</dbReference>
<dbReference type="Pfam" id="PF03737">
    <property type="entry name" value="RraA-like"/>
    <property type="match status" value="1"/>
</dbReference>
<dbReference type="SUPFAM" id="SSF89562">
    <property type="entry name" value="RraA-like"/>
    <property type="match status" value="1"/>
</dbReference>
<organism>
    <name type="scientific">Xanthomonas campestris pv. campestris (strain B100)</name>
    <dbReference type="NCBI Taxonomy" id="509169"/>
    <lineage>
        <taxon>Bacteria</taxon>
        <taxon>Pseudomonadati</taxon>
        <taxon>Pseudomonadota</taxon>
        <taxon>Gammaproteobacteria</taxon>
        <taxon>Lysobacterales</taxon>
        <taxon>Lysobacteraceae</taxon>
        <taxon>Xanthomonas</taxon>
    </lineage>
</organism>
<evidence type="ECO:0000250" key="1"/>
<evidence type="ECO:0000305" key="2"/>
<protein>
    <recommendedName>
        <fullName>Putative 4-hydroxy-4-methyl-2-oxoglutarate aldolase</fullName>
        <shortName>HMG aldolase</shortName>
        <ecNumber>4.1.3.17</ecNumber>
    </recommendedName>
    <alternativeName>
        <fullName>Oxaloacetate decarboxylase</fullName>
        <shortName>OAA decarboxylase</shortName>
        <ecNumber>4.1.1.112</ecNumber>
    </alternativeName>
    <alternativeName>
        <fullName>Regulator of ribonuclease activity homolog</fullName>
    </alternativeName>
    <alternativeName>
        <fullName>RraA-like protein</fullName>
    </alternativeName>
</protein>
<name>RRAAH_XANCB</name>
<sequence length="166" mass="17579">MTWTTPDLCDRFPEVAVAEPLFRHFGGRTTFSGPIATVRCVEDNSRIRELASTPGDGRVLVVDGQGSLRHALFGDQIGAQAVANGWAGVLIHGCVRDVEILAGLPLGVLALAACPRRTERRDLGDVDVPVNFAGVAFVPGHWLYADANGVVVAAAPLSLEVVGMEH</sequence>
<gene>
    <name type="ordered locus">xcc-b100_1525</name>
</gene>